<dbReference type="EMBL" id="CP000918">
    <property type="protein sequence ID" value="ACO16312.1"/>
    <property type="molecule type" value="Genomic_DNA"/>
</dbReference>
<dbReference type="RefSeq" id="WP_000057241.1">
    <property type="nucleotide sequence ID" value="NC_012468.1"/>
</dbReference>
<dbReference type="SMR" id="C1CAN0"/>
<dbReference type="GeneID" id="93738975"/>
<dbReference type="KEGG" id="snm:SP70585_0283"/>
<dbReference type="HOGENOM" id="CLU_131047_2_1_9"/>
<dbReference type="Proteomes" id="UP000002211">
    <property type="component" value="Chromosome"/>
</dbReference>
<dbReference type="GO" id="GO:0022625">
    <property type="term" value="C:cytosolic large ribosomal subunit"/>
    <property type="evidence" value="ECO:0007669"/>
    <property type="project" value="TreeGrafter"/>
</dbReference>
<dbReference type="GO" id="GO:0003735">
    <property type="term" value="F:structural constituent of ribosome"/>
    <property type="evidence" value="ECO:0007669"/>
    <property type="project" value="InterPro"/>
</dbReference>
<dbReference type="GO" id="GO:0006412">
    <property type="term" value="P:translation"/>
    <property type="evidence" value="ECO:0007669"/>
    <property type="project" value="UniProtKB-UniRule"/>
</dbReference>
<dbReference type="CDD" id="cd01658">
    <property type="entry name" value="Ribosomal_L30"/>
    <property type="match status" value="1"/>
</dbReference>
<dbReference type="FunFam" id="3.30.1390.20:FF:000001">
    <property type="entry name" value="50S ribosomal protein L30"/>
    <property type="match status" value="1"/>
</dbReference>
<dbReference type="Gene3D" id="3.30.1390.20">
    <property type="entry name" value="Ribosomal protein L30, ferredoxin-like fold domain"/>
    <property type="match status" value="1"/>
</dbReference>
<dbReference type="HAMAP" id="MF_01371_B">
    <property type="entry name" value="Ribosomal_uL30_B"/>
    <property type="match status" value="1"/>
</dbReference>
<dbReference type="InterPro" id="IPR036919">
    <property type="entry name" value="Ribo_uL30_ferredoxin-like_sf"/>
</dbReference>
<dbReference type="InterPro" id="IPR005996">
    <property type="entry name" value="Ribosomal_uL30_bac-type"/>
</dbReference>
<dbReference type="InterPro" id="IPR018038">
    <property type="entry name" value="Ribosomal_uL30_CS"/>
</dbReference>
<dbReference type="InterPro" id="IPR016082">
    <property type="entry name" value="Ribosomal_uL30_ferredoxin-like"/>
</dbReference>
<dbReference type="NCBIfam" id="TIGR01308">
    <property type="entry name" value="rpmD_bact"/>
    <property type="match status" value="1"/>
</dbReference>
<dbReference type="PANTHER" id="PTHR15892:SF2">
    <property type="entry name" value="LARGE RIBOSOMAL SUBUNIT PROTEIN UL30M"/>
    <property type="match status" value="1"/>
</dbReference>
<dbReference type="PANTHER" id="PTHR15892">
    <property type="entry name" value="MITOCHONDRIAL RIBOSOMAL PROTEIN L30"/>
    <property type="match status" value="1"/>
</dbReference>
<dbReference type="Pfam" id="PF00327">
    <property type="entry name" value="Ribosomal_L30"/>
    <property type="match status" value="1"/>
</dbReference>
<dbReference type="PIRSF" id="PIRSF002211">
    <property type="entry name" value="Ribosomal_L30_bac-type"/>
    <property type="match status" value="1"/>
</dbReference>
<dbReference type="SUPFAM" id="SSF55129">
    <property type="entry name" value="Ribosomal protein L30p/L7e"/>
    <property type="match status" value="1"/>
</dbReference>
<dbReference type="PROSITE" id="PS00634">
    <property type="entry name" value="RIBOSOMAL_L30"/>
    <property type="match status" value="1"/>
</dbReference>
<name>RL30_STRP7</name>
<accession>C1CAN0</accession>
<keyword id="KW-0687">Ribonucleoprotein</keyword>
<keyword id="KW-0689">Ribosomal protein</keyword>
<sequence>MAQIKITLTKSPIGRIPSQRKTVVALGLGKLNSSVIKEDNAAIRGMITAVSHLVTVEEVN</sequence>
<proteinExistence type="inferred from homology"/>
<protein>
    <recommendedName>
        <fullName evidence="1">Large ribosomal subunit protein uL30</fullName>
    </recommendedName>
    <alternativeName>
        <fullName evidence="2">50S ribosomal protein L30</fullName>
    </alternativeName>
</protein>
<reference key="1">
    <citation type="journal article" date="2010" name="Genome Biol.">
        <title>Structure and dynamics of the pan-genome of Streptococcus pneumoniae and closely related species.</title>
        <authorList>
            <person name="Donati C."/>
            <person name="Hiller N.L."/>
            <person name="Tettelin H."/>
            <person name="Muzzi A."/>
            <person name="Croucher N.J."/>
            <person name="Angiuoli S.V."/>
            <person name="Oggioni M."/>
            <person name="Dunning Hotopp J.C."/>
            <person name="Hu F.Z."/>
            <person name="Riley D.R."/>
            <person name="Covacci A."/>
            <person name="Mitchell T.J."/>
            <person name="Bentley S.D."/>
            <person name="Kilian M."/>
            <person name="Ehrlich G.D."/>
            <person name="Rappuoli R."/>
            <person name="Moxon E.R."/>
            <person name="Masignani V."/>
        </authorList>
    </citation>
    <scope>NUCLEOTIDE SEQUENCE [LARGE SCALE GENOMIC DNA]</scope>
    <source>
        <strain>70585</strain>
    </source>
</reference>
<evidence type="ECO:0000255" key="1">
    <source>
        <dbReference type="HAMAP-Rule" id="MF_01371"/>
    </source>
</evidence>
<evidence type="ECO:0000305" key="2"/>
<feature type="chain" id="PRO_1000184161" description="Large ribosomal subunit protein uL30">
    <location>
        <begin position="1"/>
        <end position="60"/>
    </location>
</feature>
<gene>
    <name evidence="1" type="primary">rpmD</name>
    <name type="ordered locus">SP70585_0283</name>
</gene>
<organism>
    <name type="scientific">Streptococcus pneumoniae (strain 70585)</name>
    <dbReference type="NCBI Taxonomy" id="488221"/>
    <lineage>
        <taxon>Bacteria</taxon>
        <taxon>Bacillati</taxon>
        <taxon>Bacillota</taxon>
        <taxon>Bacilli</taxon>
        <taxon>Lactobacillales</taxon>
        <taxon>Streptococcaceae</taxon>
        <taxon>Streptococcus</taxon>
    </lineage>
</organism>
<comment type="subunit">
    <text evidence="1">Part of the 50S ribosomal subunit.</text>
</comment>
<comment type="similarity">
    <text evidence="1">Belongs to the universal ribosomal protein uL30 family.</text>
</comment>